<protein>
    <recommendedName>
        <fullName evidence="1">7,8-didemethyl-8-hydroxy-5-deazariboflavin synthase</fullName>
        <ecNumber evidence="1">4.3.1.32</ecNumber>
    </recommendedName>
    <alternativeName>
        <fullName evidence="1">FO synthase subunit 1</fullName>
    </alternativeName>
</protein>
<organism>
    <name type="scientific">Methanococcus vannielii (strain ATCC 35089 / DSM 1224 / JCM 13029 / OCM 148 / SB)</name>
    <dbReference type="NCBI Taxonomy" id="406327"/>
    <lineage>
        <taxon>Archaea</taxon>
        <taxon>Methanobacteriati</taxon>
        <taxon>Methanobacteriota</taxon>
        <taxon>Methanomada group</taxon>
        <taxon>Methanococci</taxon>
        <taxon>Methanococcales</taxon>
        <taxon>Methanococcaceae</taxon>
        <taxon>Methanococcus</taxon>
    </lineage>
</organism>
<proteinExistence type="inferred from homology"/>
<feature type="chain" id="PRO_1000069450" description="7,8-didemethyl-8-hydroxy-5-deazariboflavin synthase">
    <location>
        <begin position="1"/>
        <end position="351"/>
    </location>
</feature>
<feature type="domain" description="Radical SAM core" evidence="2">
    <location>
        <begin position="35"/>
        <end position="275"/>
    </location>
</feature>
<feature type="binding site" evidence="1">
    <location>
        <position position="49"/>
    </location>
    <ligand>
        <name>[4Fe-4S] cluster</name>
        <dbReference type="ChEBI" id="CHEBI:49883"/>
        <note>4Fe-4S-S-AdoMet</note>
    </ligand>
</feature>
<feature type="binding site" evidence="1">
    <location>
        <position position="53"/>
    </location>
    <ligand>
        <name>[4Fe-4S] cluster</name>
        <dbReference type="ChEBI" id="CHEBI:49883"/>
        <note>4Fe-4S-S-AdoMet</note>
    </ligand>
</feature>
<feature type="binding site" evidence="1">
    <location>
        <position position="56"/>
    </location>
    <ligand>
        <name>[4Fe-4S] cluster</name>
        <dbReference type="ChEBI" id="CHEBI:49883"/>
        <note>4Fe-4S-S-AdoMet</note>
    </ligand>
</feature>
<keyword id="KW-0004">4Fe-4S</keyword>
<keyword id="KW-0408">Iron</keyword>
<keyword id="KW-0411">Iron-sulfur</keyword>
<keyword id="KW-0456">Lyase</keyword>
<keyword id="KW-0479">Metal-binding</keyword>
<keyword id="KW-0949">S-adenosyl-L-methionine</keyword>
<sequence length="351" mass="40538">MLTREKAIEFLNSNDTGPILEMLNLINGTNNGKNITYSKNAFIPVCNWCRNICGYCTFRAENFKIMTKNEVKEILLKADSLGCREALFTFGENVDENELVREKLIKMGYKNILEYLYDLCDWCLSNTNILPHTNCGILNYDELKYLRKVNVSMGLMLENSSERLCKTVAHEKSPGKNPKLRIEMIENAGKLKIPFTTGILIGIGETFEERINSIFEIKRMHEKYGHIQEVIIQNFRVKKGIPMENFIEPSPIEMFKMVMISKLILEDISIQVPPNLNRETGQLFLMGGIDDFGGVSPLTKDYVNPEAPWPDILELERFSNELGFKLKERLPIYEKYINENWIDSEILKKLI</sequence>
<evidence type="ECO:0000255" key="1">
    <source>
        <dbReference type="HAMAP-Rule" id="MF_01611"/>
    </source>
</evidence>
<evidence type="ECO:0000255" key="2">
    <source>
        <dbReference type="PROSITE-ProRule" id="PRU01266"/>
    </source>
</evidence>
<comment type="function">
    <text evidence="1">Catalyzes the radical-mediated synthesis of 7,8-didemethyl-8-hydroxy-5-deazariboflavin from 5-amino-5-(4-hydroxybenzyl)-6-(D-ribitylimino)-5,6-dihydrouracil.</text>
</comment>
<comment type="catalytic activity">
    <reaction evidence="1">
        <text>5-amino-5-(4-hydroxybenzyl)-6-(D-ribitylimino)-5,6-dihydrouracil + S-adenosyl-L-methionine = 7,8-didemethyl-8-hydroxy-5-deazariboflavin + 5'-deoxyadenosine + L-methionine + NH4(+) + H(+)</text>
        <dbReference type="Rhea" id="RHEA:55204"/>
        <dbReference type="ChEBI" id="CHEBI:15378"/>
        <dbReference type="ChEBI" id="CHEBI:17319"/>
        <dbReference type="ChEBI" id="CHEBI:28938"/>
        <dbReference type="ChEBI" id="CHEBI:57844"/>
        <dbReference type="ChEBI" id="CHEBI:59789"/>
        <dbReference type="ChEBI" id="CHEBI:59904"/>
        <dbReference type="ChEBI" id="CHEBI:85936"/>
        <dbReference type="EC" id="4.3.1.32"/>
    </reaction>
</comment>
<comment type="cofactor">
    <cofactor evidence="1">
        <name>[4Fe-4S] cluster</name>
        <dbReference type="ChEBI" id="CHEBI:49883"/>
    </cofactor>
    <text evidence="1">Binds 1 [4Fe-4S] cluster. The cluster is coordinated with 3 cysteines and an exchangeable S-adenosyl-L-methionine.</text>
</comment>
<comment type="pathway">
    <text evidence="1">Cofactor biosynthesis; coenzyme F0 biosynthesis.</text>
</comment>
<comment type="subunit">
    <text evidence="1">Consists of two subunits, CofG and CofH.</text>
</comment>
<comment type="similarity">
    <text evidence="1">Belongs to the radical SAM superfamily. CofG family.</text>
</comment>
<accession>A6UN87</accession>
<gene>
    <name evidence="1" type="primary">cofG</name>
    <name type="ordered locus">Mevan_0044</name>
</gene>
<dbReference type="EC" id="4.3.1.32" evidence="1"/>
<dbReference type="EMBL" id="CP000742">
    <property type="protein sequence ID" value="ABR53959.1"/>
    <property type="molecule type" value="Genomic_DNA"/>
</dbReference>
<dbReference type="RefSeq" id="WP_011971863.1">
    <property type="nucleotide sequence ID" value="NC_009634.1"/>
</dbReference>
<dbReference type="SMR" id="A6UN87"/>
<dbReference type="STRING" id="406327.Mevan_0044"/>
<dbReference type="GeneID" id="5325594"/>
<dbReference type="KEGG" id="mvn:Mevan_0044"/>
<dbReference type="eggNOG" id="arCOG00657">
    <property type="taxonomic scope" value="Archaea"/>
</dbReference>
<dbReference type="HOGENOM" id="CLU_054174_0_0_2"/>
<dbReference type="OrthoDB" id="35347at2157"/>
<dbReference type="UniPathway" id="UPA00072"/>
<dbReference type="Proteomes" id="UP000001107">
    <property type="component" value="Chromosome"/>
</dbReference>
<dbReference type="GO" id="GO:0051539">
    <property type="term" value="F:4 iron, 4 sulfur cluster binding"/>
    <property type="evidence" value="ECO:0007669"/>
    <property type="project" value="UniProtKB-KW"/>
</dbReference>
<dbReference type="GO" id="GO:0044689">
    <property type="term" value="F:7,8-didemethyl-8-hydroxy-5-deazariboflavin synthase activity"/>
    <property type="evidence" value="ECO:0007669"/>
    <property type="project" value="UniProtKB-EC"/>
</dbReference>
<dbReference type="GO" id="GO:0005506">
    <property type="term" value="F:iron ion binding"/>
    <property type="evidence" value="ECO:0007669"/>
    <property type="project" value="UniProtKB-UniRule"/>
</dbReference>
<dbReference type="GO" id="GO:0016765">
    <property type="term" value="F:transferase activity, transferring alkyl or aryl (other than methyl) groups"/>
    <property type="evidence" value="ECO:0007669"/>
    <property type="project" value="InterPro"/>
</dbReference>
<dbReference type="CDD" id="cd01335">
    <property type="entry name" value="Radical_SAM"/>
    <property type="match status" value="1"/>
</dbReference>
<dbReference type="Gene3D" id="3.20.20.70">
    <property type="entry name" value="Aldolase class I"/>
    <property type="match status" value="1"/>
</dbReference>
<dbReference type="HAMAP" id="MF_01611">
    <property type="entry name" value="FO_synth_sub1"/>
    <property type="match status" value="1"/>
</dbReference>
<dbReference type="InterPro" id="IPR013785">
    <property type="entry name" value="Aldolase_TIM"/>
</dbReference>
<dbReference type="InterPro" id="IPR019939">
    <property type="entry name" value="CofG_family"/>
</dbReference>
<dbReference type="InterPro" id="IPR006638">
    <property type="entry name" value="Elp3/MiaA/NifB-like_rSAM"/>
</dbReference>
<dbReference type="InterPro" id="IPR034405">
    <property type="entry name" value="F420"/>
</dbReference>
<dbReference type="InterPro" id="IPR007197">
    <property type="entry name" value="rSAM"/>
</dbReference>
<dbReference type="NCBIfam" id="TIGR03550">
    <property type="entry name" value="F420_cofG"/>
    <property type="match status" value="1"/>
</dbReference>
<dbReference type="NCBIfam" id="NF004884">
    <property type="entry name" value="PRK06245.1"/>
    <property type="match status" value="1"/>
</dbReference>
<dbReference type="PANTHER" id="PTHR43076:SF15">
    <property type="entry name" value="7,8-DIDEMETHYL-8-HYDROXY-5-DEAZARIBOFLAVIN SYNTHASE"/>
    <property type="match status" value="1"/>
</dbReference>
<dbReference type="PANTHER" id="PTHR43076">
    <property type="entry name" value="FO SYNTHASE (COFH)"/>
    <property type="match status" value="1"/>
</dbReference>
<dbReference type="Pfam" id="PF04055">
    <property type="entry name" value="Radical_SAM"/>
    <property type="match status" value="1"/>
</dbReference>
<dbReference type="SFLD" id="SFLDF00294">
    <property type="entry name" value="7_8-didemethyl-8-hydroxy-5-dea"/>
    <property type="match status" value="1"/>
</dbReference>
<dbReference type="SFLD" id="SFLDS00029">
    <property type="entry name" value="Radical_SAM"/>
    <property type="match status" value="1"/>
</dbReference>
<dbReference type="SMART" id="SM00729">
    <property type="entry name" value="Elp3"/>
    <property type="match status" value="1"/>
</dbReference>
<dbReference type="SUPFAM" id="SSF102114">
    <property type="entry name" value="Radical SAM enzymes"/>
    <property type="match status" value="1"/>
</dbReference>
<dbReference type="PROSITE" id="PS51918">
    <property type="entry name" value="RADICAL_SAM"/>
    <property type="match status" value="1"/>
</dbReference>
<reference key="1">
    <citation type="submission" date="2007-06" db="EMBL/GenBank/DDBJ databases">
        <title>Complete sequence of Methanococcus vannielii SB.</title>
        <authorList>
            <consortium name="US DOE Joint Genome Institute"/>
            <person name="Copeland A."/>
            <person name="Lucas S."/>
            <person name="Lapidus A."/>
            <person name="Barry K."/>
            <person name="Glavina del Rio T."/>
            <person name="Dalin E."/>
            <person name="Tice H."/>
            <person name="Pitluck S."/>
            <person name="Chain P."/>
            <person name="Malfatti S."/>
            <person name="Shin M."/>
            <person name="Vergez L."/>
            <person name="Schmutz J."/>
            <person name="Larimer F."/>
            <person name="Land M."/>
            <person name="Hauser L."/>
            <person name="Kyrpides N."/>
            <person name="Anderson I."/>
            <person name="Sieprawska-Lupa M."/>
            <person name="Whitman W.B."/>
            <person name="Richardson P."/>
        </authorList>
    </citation>
    <scope>NUCLEOTIDE SEQUENCE [LARGE SCALE GENOMIC DNA]</scope>
    <source>
        <strain>ATCC 35089 / DSM 1224 / JCM 13029 / OCM 148 / SB</strain>
    </source>
</reference>
<name>COFG_METVS</name>